<dbReference type="EC" id="3.6.1.-" evidence="1"/>
<dbReference type="EMBL" id="BA000034">
    <property type="protein sequence ID" value="BAC63291.1"/>
    <property type="molecule type" value="Genomic_DNA"/>
</dbReference>
<dbReference type="RefSeq" id="WP_011054174.1">
    <property type="nucleotide sequence ID" value="NC_004606.1"/>
</dbReference>
<dbReference type="SMR" id="P0DF43"/>
<dbReference type="KEGG" id="sps:SPs0196"/>
<dbReference type="HOGENOM" id="CLU_033617_2_1_9"/>
<dbReference type="GO" id="GO:0005737">
    <property type="term" value="C:cytoplasm"/>
    <property type="evidence" value="ECO:0007669"/>
    <property type="project" value="UniProtKB-SubCell"/>
</dbReference>
<dbReference type="GO" id="GO:0005525">
    <property type="term" value="F:GTP binding"/>
    <property type="evidence" value="ECO:0007669"/>
    <property type="project" value="UniProtKB-UniRule"/>
</dbReference>
<dbReference type="GO" id="GO:0003924">
    <property type="term" value="F:GTPase activity"/>
    <property type="evidence" value="ECO:0007669"/>
    <property type="project" value="UniProtKB-UniRule"/>
</dbReference>
<dbReference type="GO" id="GO:0046872">
    <property type="term" value="F:metal ion binding"/>
    <property type="evidence" value="ECO:0007669"/>
    <property type="project" value="UniProtKB-KW"/>
</dbReference>
<dbReference type="GO" id="GO:0019843">
    <property type="term" value="F:rRNA binding"/>
    <property type="evidence" value="ECO:0007669"/>
    <property type="project" value="UniProtKB-KW"/>
</dbReference>
<dbReference type="GO" id="GO:0042274">
    <property type="term" value="P:ribosomal small subunit biogenesis"/>
    <property type="evidence" value="ECO:0007669"/>
    <property type="project" value="UniProtKB-UniRule"/>
</dbReference>
<dbReference type="CDD" id="cd04466">
    <property type="entry name" value="S1_YloQ_GTPase"/>
    <property type="match status" value="1"/>
</dbReference>
<dbReference type="CDD" id="cd01854">
    <property type="entry name" value="YjeQ_EngC"/>
    <property type="match status" value="1"/>
</dbReference>
<dbReference type="Gene3D" id="2.40.50.140">
    <property type="entry name" value="Nucleic acid-binding proteins"/>
    <property type="match status" value="1"/>
</dbReference>
<dbReference type="Gene3D" id="3.40.50.300">
    <property type="entry name" value="P-loop containing nucleotide triphosphate hydrolases"/>
    <property type="match status" value="1"/>
</dbReference>
<dbReference type="Gene3D" id="1.10.40.50">
    <property type="entry name" value="Probable gtpase engc, domain 3"/>
    <property type="match status" value="1"/>
</dbReference>
<dbReference type="HAMAP" id="MF_01820">
    <property type="entry name" value="GTPase_RsgA"/>
    <property type="match status" value="1"/>
</dbReference>
<dbReference type="InterPro" id="IPR030378">
    <property type="entry name" value="G_CP_dom"/>
</dbReference>
<dbReference type="InterPro" id="IPR012340">
    <property type="entry name" value="NA-bd_OB-fold"/>
</dbReference>
<dbReference type="InterPro" id="IPR027417">
    <property type="entry name" value="P-loop_NTPase"/>
</dbReference>
<dbReference type="InterPro" id="IPR004881">
    <property type="entry name" value="Ribosome_biogen_GTPase_RsgA"/>
</dbReference>
<dbReference type="InterPro" id="IPR010914">
    <property type="entry name" value="RsgA_GTPase_dom"/>
</dbReference>
<dbReference type="InterPro" id="IPR031944">
    <property type="entry name" value="RsgA_N"/>
</dbReference>
<dbReference type="NCBIfam" id="TIGR00157">
    <property type="entry name" value="ribosome small subunit-dependent GTPase A"/>
    <property type="match status" value="1"/>
</dbReference>
<dbReference type="PANTHER" id="PTHR32120">
    <property type="entry name" value="SMALL RIBOSOMAL SUBUNIT BIOGENESIS GTPASE RSGA"/>
    <property type="match status" value="1"/>
</dbReference>
<dbReference type="PANTHER" id="PTHR32120:SF11">
    <property type="entry name" value="SMALL RIBOSOMAL SUBUNIT BIOGENESIS GTPASE RSGA 1, MITOCHONDRIAL-RELATED"/>
    <property type="match status" value="1"/>
</dbReference>
<dbReference type="Pfam" id="PF03193">
    <property type="entry name" value="RsgA_GTPase"/>
    <property type="match status" value="1"/>
</dbReference>
<dbReference type="Pfam" id="PF16745">
    <property type="entry name" value="RsgA_N"/>
    <property type="match status" value="1"/>
</dbReference>
<dbReference type="SUPFAM" id="SSF50249">
    <property type="entry name" value="Nucleic acid-binding proteins"/>
    <property type="match status" value="1"/>
</dbReference>
<dbReference type="SUPFAM" id="SSF52540">
    <property type="entry name" value="P-loop containing nucleoside triphosphate hydrolases"/>
    <property type="match status" value="1"/>
</dbReference>
<dbReference type="PROSITE" id="PS50936">
    <property type="entry name" value="ENGC_GTPASE"/>
    <property type="match status" value="1"/>
</dbReference>
<dbReference type="PROSITE" id="PS51721">
    <property type="entry name" value="G_CP"/>
    <property type="match status" value="1"/>
</dbReference>
<keyword id="KW-0963">Cytoplasm</keyword>
<keyword id="KW-0342">GTP-binding</keyword>
<keyword id="KW-0378">Hydrolase</keyword>
<keyword id="KW-0479">Metal-binding</keyword>
<keyword id="KW-0547">Nucleotide-binding</keyword>
<keyword id="KW-0690">Ribosome biogenesis</keyword>
<keyword id="KW-0694">RNA-binding</keyword>
<keyword id="KW-0699">rRNA-binding</keyword>
<keyword id="KW-0862">Zinc</keyword>
<accession>P0DF43</accession>
<accession>Q879M4</accession>
<accession>Q8K8N5</accession>
<protein>
    <recommendedName>
        <fullName evidence="1">Small ribosomal subunit biogenesis GTPase RsgA</fullName>
        <ecNumber evidence="1">3.6.1.-</ecNumber>
    </recommendedName>
</protein>
<name>RSGA_STRPQ</name>
<sequence length="290" mass="32878">MQGKIIKSLAGFYYVESEGQVYQTRARGNFRKRGETPYVGDIVDFSAEDNSEGYILAIYPRKNSLVRPPIVNIDQAVVIMSAKEPEFNSNLLDRFLILLEHKAIHPVVYISKMDLLDSPEEIKAIGRQYQAIGYDFVTSLEELLPLLADKITVFMGQTGVGKSTLLNRIAPELALETGEISDSLGRGRHTTRAVSFYNTHGGKIADTPGFSSLDYDIANAEDLNEAFPELRRLSHECKFRSCTHTHEPKCAVKAALETGELWPVRYEHYLQFLSEIENRRETYKKVIKRK</sequence>
<comment type="function">
    <text evidence="1">One of several proteins that assist in the late maturation steps of the functional core of the 30S ribosomal subunit. Helps release RbfA from mature subunits. May play a role in the assembly of ribosomal proteins into the subunit. Circularly permuted GTPase that catalyzes slow GTP hydrolysis, GTPase activity is stimulated by the 30S ribosomal subunit.</text>
</comment>
<comment type="cofactor">
    <cofactor evidence="1">
        <name>Zn(2+)</name>
        <dbReference type="ChEBI" id="CHEBI:29105"/>
    </cofactor>
    <text evidence="1">Binds 1 zinc ion per subunit.</text>
</comment>
<comment type="subunit">
    <text evidence="1">Monomer. Associates with 30S ribosomal subunit, binds 16S rRNA.</text>
</comment>
<comment type="subcellular location">
    <subcellularLocation>
        <location evidence="1">Cytoplasm</location>
    </subcellularLocation>
</comment>
<comment type="similarity">
    <text evidence="1">Belongs to the TRAFAC class YlqF/YawG GTPase family. RsgA subfamily.</text>
</comment>
<feature type="chain" id="PRO_0000411561" description="Small ribosomal subunit biogenesis GTPase RsgA">
    <location>
        <begin position="1"/>
        <end position="290"/>
    </location>
</feature>
<feature type="domain" description="CP-type G" evidence="2">
    <location>
        <begin position="62"/>
        <end position="213"/>
    </location>
</feature>
<feature type="binding site" evidence="1">
    <location>
        <begin position="111"/>
        <end position="114"/>
    </location>
    <ligand>
        <name>GTP</name>
        <dbReference type="ChEBI" id="CHEBI:37565"/>
    </ligand>
</feature>
<feature type="binding site" evidence="1">
    <location>
        <begin position="156"/>
        <end position="164"/>
    </location>
    <ligand>
        <name>GTP</name>
        <dbReference type="ChEBI" id="CHEBI:37565"/>
    </ligand>
</feature>
<feature type="binding site" evidence="1">
    <location>
        <position position="237"/>
    </location>
    <ligand>
        <name>Zn(2+)</name>
        <dbReference type="ChEBI" id="CHEBI:29105"/>
    </ligand>
</feature>
<feature type="binding site" evidence="1">
    <location>
        <position position="242"/>
    </location>
    <ligand>
        <name>Zn(2+)</name>
        <dbReference type="ChEBI" id="CHEBI:29105"/>
    </ligand>
</feature>
<feature type="binding site" evidence="1">
    <location>
        <position position="244"/>
    </location>
    <ligand>
        <name>Zn(2+)</name>
        <dbReference type="ChEBI" id="CHEBI:29105"/>
    </ligand>
</feature>
<feature type="binding site" evidence="1">
    <location>
        <position position="250"/>
    </location>
    <ligand>
        <name>Zn(2+)</name>
        <dbReference type="ChEBI" id="CHEBI:29105"/>
    </ligand>
</feature>
<gene>
    <name evidence="1" type="primary">rsgA</name>
    <name type="ordered locus">SPs0196</name>
</gene>
<organism>
    <name type="scientific">Streptococcus pyogenes serotype M3 (strain SSI-1)</name>
    <dbReference type="NCBI Taxonomy" id="193567"/>
    <lineage>
        <taxon>Bacteria</taxon>
        <taxon>Bacillati</taxon>
        <taxon>Bacillota</taxon>
        <taxon>Bacilli</taxon>
        <taxon>Lactobacillales</taxon>
        <taxon>Streptococcaceae</taxon>
        <taxon>Streptococcus</taxon>
    </lineage>
</organism>
<reference key="1">
    <citation type="journal article" date="2003" name="Genome Res.">
        <title>Genome sequence of an M3 strain of Streptococcus pyogenes reveals a large-scale genomic rearrangement in invasive strains and new insights into phage evolution.</title>
        <authorList>
            <person name="Nakagawa I."/>
            <person name="Kurokawa K."/>
            <person name="Yamashita A."/>
            <person name="Nakata M."/>
            <person name="Tomiyasu Y."/>
            <person name="Okahashi N."/>
            <person name="Kawabata S."/>
            <person name="Yamazaki K."/>
            <person name="Shiba T."/>
            <person name="Yasunaga T."/>
            <person name="Hayashi H."/>
            <person name="Hattori M."/>
            <person name="Hamada S."/>
        </authorList>
    </citation>
    <scope>NUCLEOTIDE SEQUENCE [LARGE SCALE GENOMIC DNA]</scope>
    <source>
        <strain>SSI-1</strain>
    </source>
</reference>
<evidence type="ECO:0000255" key="1">
    <source>
        <dbReference type="HAMAP-Rule" id="MF_01820"/>
    </source>
</evidence>
<evidence type="ECO:0000255" key="2">
    <source>
        <dbReference type="PROSITE-ProRule" id="PRU01058"/>
    </source>
</evidence>
<proteinExistence type="inferred from homology"/>